<comment type="function">
    <text evidence="2 6">Transferase that catalyzes the transfer of sulfur from thiosulfate to thiophilic acceptors such as cyanide or dithiols (PubMed:10735872). May function in a CysM-independent thiosulfate assimilation pathway by catalyzing the conversion of thiosulfate to sulfite, which can then be used for L-cysteine biosynthesis (PubMed:28756590). The relatively low affinity of GlpE for both thiosulfate and cyanide suggests that these compounds may not be physiological substrates (PubMed:10735872). Thioredoxin 1 or related dithiol proteins could be the physiological sulfur acceptor (PubMed:10735872).</text>
</comment>
<comment type="catalytic activity">
    <reaction evidence="2 10">
        <text>thiosulfate + hydrogen cyanide = thiocyanate + sulfite + 2 H(+)</text>
        <dbReference type="Rhea" id="RHEA:16881"/>
        <dbReference type="ChEBI" id="CHEBI:15378"/>
        <dbReference type="ChEBI" id="CHEBI:17359"/>
        <dbReference type="ChEBI" id="CHEBI:18022"/>
        <dbReference type="ChEBI" id="CHEBI:18407"/>
        <dbReference type="ChEBI" id="CHEBI:33542"/>
        <dbReference type="EC" id="2.8.1.1"/>
    </reaction>
</comment>
<comment type="catalytic activity">
    <reaction evidence="2">
        <text>thiosulfate + [thioredoxin]-dithiol = [thioredoxin]-disulfide + hydrogen sulfide + sulfite + 2 H(+)</text>
        <dbReference type="Rhea" id="RHEA:83859"/>
        <dbReference type="Rhea" id="RHEA-COMP:10698"/>
        <dbReference type="Rhea" id="RHEA-COMP:10700"/>
        <dbReference type="ChEBI" id="CHEBI:15378"/>
        <dbReference type="ChEBI" id="CHEBI:17359"/>
        <dbReference type="ChEBI" id="CHEBI:29919"/>
        <dbReference type="ChEBI" id="CHEBI:29950"/>
        <dbReference type="ChEBI" id="CHEBI:33542"/>
        <dbReference type="ChEBI" id="CHEBI:50058"/>
    </reaction>
</comment>
<comment type="activity regulation">
    <text evidence="2">Incubation with the cysteine-specific modifying reagent DTNB resulted in a greater-than-90% loss of activity (PubMed:10735872). Does not exhibit anion-specific inhibition (PubMed:10735872).</text>
</comment>
<comment type="biophysicochemical properties">
    <kinetics>
        <KM evidence="2">34 uM for thioredoxin 1</KM>
        <KM evidence="2">17 mM for cyanide</KM>
        <KM evidence="2">78 mM for thiosulfate</KM>
        <text evidence="2">kcat is 230 sec(-1) with cyanide as substrate.</text>
    </kinetics>
</comment>
<comment type="subunit">
    <text evidence="2 3">Homodimer (PubMed:10735872). Monomeric in the crystal structure (PubMed:11709175).</text>
</comment>
<comment type="subcellular location">
    <subcellularLocation>
        <location evidence="2">Cytoplasm</location>
    </subcellularLocation>
</comment>
<comment type="induction">
    <text evidence="4">Expression is positively regulated by cyclic AMP-cAMP receptor protein (cAMP-CRP).</text>
</comment>
<comment type="disruption phenotype">
    <text evidence="5">The deletion mutant displays no apparent growth phenotypes (PubMed:19088907). The mutant is capable of growth on glucose, glycerol or acetate minimal media without supplementation (PubMed:19088907). Deletion of the gene decreases total rhodanese activity by about 10% (PubMed:19088907).</text>
</comment>
<comment type="miscellaneous">
    <text evidence="6">Overexpression of GlpE can complement the growth-defective phenotype of the thiosulfate-grown cysM deletion mutant.</text>
</comment>
<comment type="similarity">
    <text evidence="1 9">Belongs to the GlpE family.</text>
</comment>
<comment type="sequence caution" evidence="9">
    <conflict type="erroneous initiation">
        <sequence resource="EMBL-CDS" id="AAA23889"/>
    </conflict>
</comment>
<feature type="chain" id="PRO_0000200549" description="Thiosulfate sulfurtransferase GlpE">
    <location>
        <begin position="1"/>
        <end position="108"/>
    </location>
</feature>
<feature type="domain" description="Rhodanese" evidence="1">
    <location>
        <begin position="17"/>
        <end position="105"/>
    </location>
</feature>
<feature type="active site" description="Cysteine persulfide intermediate" evidence="3 14">
    <location>
        <position position="65"/>
    </location>
</feature>
<feature type="sequence conflict" description="In Ref. 2." evidence="9" ref="2">
    <original>A</original>
    <variation>RNALYCPLLCGISDSNDVDDYLFC</variation>
    <location>
        <position position="108"/>
    </location>
</feature>
<feature type="strand" evidence="16">
    <location>
        <begin position="5"/>
        <end position="7"/>
    </location>
</feature>
<feature type="helix" evidence="16">
    <location>
        <begin position="9"/>
        <end position="17"/>
    </location>
</feature>
<feature type="strand" evidence="16">
    <location>
        <begin position="22"/>
        <end position="25"/>
    </location>
</feature>
<feature type="helix" evidence="16">
    <location>
        <begin position="29"/>
        <end position="34"/>
    </location>
</feature>
<feature type="helix" evidence="16">
    <location>
        <begin position="45"/>
        <end position="54"/>
    </location>
</feature>
<feature type="strand" evidence="16">
    <location>
        <begin position="61"/>
        <end position="64"/>
    </location>
</feature>
<feature type="strand" evidence="16">
    <location>
        <begin position="66"/>
        <end position="69"/>
    </location>
</feature>
<feature type="helix" evidence="16">
    <location>
        <begin position="70"/>
        <end position="81"/>
    </location>
</feature>
<feature type="strand" evidence="16">
    <location>
        <begin position="84"/>
        <end position="89"/>
    </location>
</feature>
<feature type="helix" evidence="16">
    <location>
        <begin position="92"/>
        <end position="99"/>
    </location>
</feature>
<feature type="helix" evidence="16">
    <location>
        <begin position="101"/>
        <end position="103"/>
    </location>
</feature>
<evidence type="ECO:0000255" key="1">
    <source>
        <dbReference type="HAMAP-Rule" id="MF_01009"/>
    </source>
</evidence>
<evidence type="ECO:0000269" key="2">
    <source>
    </source>
</evidence>
<evidence type="ECO:0000269" key="3">
    <source>
    </source>
</evidence>
<evidence type="ECO:0000269" key="4">
    <source>
    </source>
</evidence>
<evidence type="ECO:0000269" key="5">
    <source>
    </source>
</evidence>
<evidence type="ECO:0000269" key="6">
    <source>
    </source>
</evidence>
<evidence type="ECO:0000303" key="7">
    <source>
    </source>
</evidence>
<evidence type="ECO:0000303" key="8">
    <source>
    </source>
</evidence>
<evidence type="ECO:0000305" key="9"/>
<evidence type="ECO:0000305" key="10">
    <source>
    </source>
</evidence>
<evidence type="ECO:0000312" key="11">
    <source>
        <dbReference type="EMBL" id="AAA23889.1"/>
    </source>
</evidence>
<evidence type="ECO:0000312" key="12">
    <source>
        <dbReference type="EMBL" id="AAC28165.1"/>
    </source>
</evidence>
<evidence type="ECO:0000312" key="13">
    <source>
        <dbReference type="EMBL" id="CAA30397.1"/>
    </source>
</evidence>
<evidence type="ECO:0007744" key="14">
    <source>
        <dbReference type="PDB" id="1GMX"/>
    </source>
</evidence>
<evidence type="ECO:0007744" key="15">
    <source>
        <dbReference type="PDB" id="1GN0"/>
    </source>
</evidence>
<evidence type="ECO:0007829" key="16">
    <source>
        <dbReference type="PDB" id="1GMX"/>
    </source>
</evidence>
<gene>
    <name evidence="8" type="primary">glpE</name>
    <name type="ordered locus">b3425</name>
    <name type="ordered locus">JW3388</name>
</gene>
<organism>
    <name type="scientific">Escherichia coli (strain K12)</name>
    <dbReference type="NCBI Taxonomy" id="83333"/>
    <lineage>
        <taxon>Bacteria</taxon>
        <taxon>Pseudomonadati</taxon>
        <taxon>Pseudomonadota</taxon>
        <taxon>Gammaproteobacteria</taxon>
        <taxon>Enterobacterales</taxon>
        <taxon>Enterobacteriaceae</taxon>
        <taxon>Escherichia</taxon>
    </lineage>
</organism>
<keyword id="KW-0002">3D-structure</keyword>
<keyword id="KW-0963">Cytoplasm</keyword>
<keyword id="KW-1185">Reference proteome</keyword>
<keyword id="KW-0808">Transferase</keyword>
<dbReference type="EC" id="2.8.1.1" evidence="2 10"/>
<dbReference type="EMBL" id="M96795">
    <property type="protein sequence ID" value="AAC28165.1"/>
    <property type="molecule type" value="Genomic_DNA"/>
</dbReference>
<dbReference type="EMBL" id="X07520">
    <property type="protein sequence ID" value="CAA30397.1"/>
    <property type="molecule type" value="Genomic_DNA"/>
</dbReference>
<dbReference type="EMBL" id="M54940">
    <property type="protein sequence ID" value="AAA23889.1"/>
    <property type="status" value="ALT_INIT"/>
    <property type="molecule type" value="Genomic_DNA"/>
</dbReference>
<dbReference type="EMBL" id="U18997">
    <property type="protein sequence ID" value="AAA58223.1"/>
    <property type="molecule type" value="Genomic_DNA"/>
</dbReference>
<dbReference type="EMBL" id="U00096">
    <property type="protein sequence ID" value="AAC76450.1"/>
    <property type="molecule type" value="Genomic_DNA"/>
</dbReference>
<dbReference type="EMBL" id="AP009048">
    <property type="protein sequence ID" value="BAE77867.1"/>
    <property type="molecule type" value="Genomic_DNA"/>
</dbReference>
<dbReference type="PIR" id="D65138">
    <property type="entry name" value="BVECGE"/>
</dbReference>
<dbReference type="RefSeq" id="NP_417883.1">
    <property type="nucleotide sequence ID" value="NC_000913.3"/>
</dbReference>
<dbReference type="RefSeq" id="WP_000371928.1">
    <property type="nucleotide sequence ID" value="NZ_SSZK01000008.1"/>
</dbReference>
<dbReference type="PDB" id="1GMX">
    <property type="method" value="X-ray"/>
    <property type="resolution" value="1.10 A"/>
    <property type="chains" value="A=1-108"/>
</dbReference>
<dbReference type="PDB" id="1GN0">
    <property type="method" value="X-ray"/>
    <property type="resolution" value="1.80 A"/>
    <property type="chains" value="A=1-108"/>
</dbReference>
<dbReference type="PDBsum" id="1GMX"/>
<dbReference type="PDBsum" id="1GN0"/>
<dbReference type="SMR" id="P0A6V5"/>
<dbReference type="BioGRID" id="4262487">
    <property type="interactions" value="11"/>
</dbReference>
<dbReference type="FunCoup" id="P0A6V5">
    <property type="interactions" value="221"/>
</dbReference>
<dbReference type="IntAct" id="P0A6V5">
    <property type="interactions" value="2"/>
</dbReference>
<dbReference type="STRING" id="511145.b3425"/>
<dbReference type="jPOST" id="P0A6V5"/>
<dbReference type="PaxDb" id="511145-b3425"/>
<dbReference type="EnsemblBacteria" id="AAC76450">
    <property type="protein sequence ID" value="AAC76450"/>
    <property type="gene ID" value="b3425"/>
</dbReference>
<dbReference type="GeneID" id="93778571"/>
<dbReference type="GeneID" id="947935"/>
<dbReference type="KEGG" id="ecj:JW3388"/>
<dbReference type="KEGG" id="eco:b3425"/>
<dbReference type="KEGG" id="ecoc:C3026_18570"/>
<dbReference type="PATRIC" id="fig|511145.12.peg.3520"/>
<dbReference type="EchoBASE" id="EB0390"/>
<dbReference type="eggNOG" id="COG0607">
    <property type="taxonomic scope" value="Bacteria"/>
</dbReference>
<dbReference type="HOGENOM" id="CLU_089574_14_0_6"/>
<dbReference type="InParanoid" id="P0A6V5"/>
<dbReference type="OMA" id="VCYHGIS"/>
<dbReference type="OrthoDB" id="9811849at2"/>
<dbReference type="PhylomeDB" id="P0A6V5"/>
<dbReference type="BioCyc" id="EcoCyc:EG10395-MONOMER"/>
<dbReference type="BioCyc" id="MetaCyc:EG10395-MONOMER"/>
<dbReference type="EvolutionaryTrace" id="P0A6V5"/>
<dbReference type="PRO" id="PR:P0A6V5"/>
<dbReference type="Proteomes" id="UP000000625">
    <property type="component" value="Chromosome"/>
</dbReference>
<dbReference type="GO" id="GO:0005737">
    <property type="term" value="C:cytoplasm"/>
    <property type="evidence" value="ECO:0000314"/>
    <property type="project" value="EcoCyc"/>
</dbReference>
<dbReference type="GO" id="GO:0004792">
    <property type="term" value="F:thiosulfate-cyanide sulfurtransferase activity"/>
    <property type="evidence" value="ECO:0000314"/>
    <property type="project" value="EcoCyc"/>
</dbReference>
<dbReference type="GO" id="GO:0006071">
    <property type="term" value="P:glycerol metabolic process"/>
    <property type="evidence" value="ECO:0007669"/>
    <property type="project" value="UniProtKB-UniRule"/>
</dbReference>
<dbReference type="GO" id="GO:0006791">
    <property type="term" value="P:sulfur utilization"/>
    <property type="evidence" value="ECO:0000315"/>
    <property type="project" value="EcoCyc"/>
</dbReference>
<dbReference type="CDD" id="cd01444">
    <property type="entry name" value="GlpE_ST"/>
    <property type="match status" value="1"/>
</dbReference>
<dbReference type="FunFam" id="3.40.250.10:FF:000007">
    <property type="entry name" value="Thiosulfate sulfurtransferase GlpE"/>
    <property type="match status" value="1"/>
</dbReference>
<dbReference type="Gene3D" id="3.40.250.10">
    <property type="entry name" value="Rhodanese-like domain"/>
    <property type="match status" value="1"/>
</dbReference>
<dbReference type="HAMAP" id="MF_01009">
    <property type="entry name" value="Thiosulf_sulfurtr"/>
    <property type="match status" value="1"/>
</dbReference>
<dbReference type="InterPro" id="IPR050229">
    <property type="entry name" value="GlpE_sulfurtransferase"/>
</dbReference>
<dbReference type="InterPro" id="IPR001763">
    <property type="entry name" value="Rhodanese-like_dom"/>
</dbReference>
<dbReference type="InterPro" id="IPR036873">
    <property type="entry name" value="Rhodanese-like_dom_sf"/>
</dbReference>
<dbReference type="InterPro" id="IPR023695">
    <property type="entry name" value="Thiosulf_sulfurTrfase"/>
</dbReference>
<dbReference type="NCBIfam" id="NF001195">
    <property type="entry name" value="PRK00162.1"/>
    <property type="match status" value="1"/>
</dbReference>
<dbReference type="PANTHER" id="PTHR43031">
    <property type="entry name" value="FAD-DEPENDENT OXIDOREDUCTASE"/>
    <property type="match status" value="1"/>
</dbReference>
<dbReference type="PANTHER" id="PTHR43031:SF6">
    <property type="entry name" value="THIOSULFATE SULFURTRANSFERASE GLPE"/>
    <property type="match status" value="1"/>
</dbReference>
<dbReference type="Pfam" id="PF00581">
    <property type="entry name" value="Rhodanese"/>
    <property type="match status" value="1"/>
</dbReference>
<dbReference type="SMART" id="SM00450">
    <property type="entry name" value="RHOD"/>
    <property type="match status" value="1"/>
</dbReference>
<dbReference type="SUPFAM" id="SSF52821">
    <property type="entry name" value="Rhodanese/Cell cycle control phosphatase"/>
    <property type="match status" value="1"/>
</dbReference>
<dbReference type="PROSITE" id="PS50206">
    <property type="entry name" value="RHODANESE_3"/>
    <property type="match status" value="1"/>
</dbReference>
<sequence>MDQFECINVADAHQKLQEKEAVLVDIRDPQSFAMGHAVQAFHLTNDTLGAFMRDNDFDTPVMVMCYHGNSSKGAAQYLLQQGYDVVYSIDGGFEAWQRQFPAEVAYGA</sequence>
<accession>P0A6V5</accession>
<accession>P09390</accession>
<accession>Q2M789</accession>
<accession>Q47235</accession>
<reference evidence="12" key="1">
    <citation type="journal article" date="1996" name="J. Bacteriol.">
        <title>Repressor for the sn-glycerol 3-phosphate regulon of Escherichia coli K-12: primary structure and identification of the DNA-binding domain.</title>
        <authorList>
            <person name="Zeng G."/>
            <person name="Ye S."/>
            <person name="Larson T.J."/>
        </authorList>
    </citation>
    <scope>NUCLEOTIDE SEQUENCE [GENOMIC DNA]</scope>
    <source>
        <strain>K12</strain>
    </source>
</reference>
<reference evidence="11 13" key="2">
    <citation type="journal article" date="1988" name="Nucleic Acids Res.">
        <title>Nucleotide sequence of the glpR gene encoding the repressor for the glycerol-3-phosphate regulon of Escherichia coli K12.</title>
        <authorList>
            <person name="Choi Y.-L."/>
            <person name="Kawase S."/>
            <person name="Nishida T."/>
            <person name="Sakai H."/>
            <person name="Komano T."/>
            <person name="Kawamukai M."/>
            <person name="Utsumi R."/>
            <person name="Kohara Y."/>
            <person name="Akiyama K."/>
        </authorList>
    </citation>
    <scope>NUCLEOTIDE SEQUENCE [GENOMIC DNA]</scope>
    <source>
        <strain>K12</strain>
    </source>
</reference>
<reference key="3">
    <citation type="journal article" date="1997" name="Science">
        <title>The complete genome sequence of Escherichia coli K-12.</title>
        <authorList>
            <person name="Blattner F.R."/>
            <person name="Plunkett G. III"/>
            <person name="Bloch C.A."/>
            <person name="Perna N.T."/>
            <person name="Burland V."/>
            <person name="Riley M."/>
            <person name="Collado-Vides J."/>
            <person name="Glasner J.D."/>
            <person name="Rode C.K."/>
            <person name="Mayhew G.F."/>
            <person name="Gregor J."/>
            <person name="Davis N.W."/>
            <person name="Kirkpatrick H.A."/>
            <person name="Goeden M.A."/>
            <person name="Rose D.J."/>
            <person name="Mau B."/>
            <person name="Shao Y."/>
        </authorList>
    </citation>
    <scope>NUCLEOTIDE SEQUENCE [LARGE SCALE GENOMIC DNA]</scope>
    <source>
        <strain>K12 / MG1655 / ATCC 47076</strain>
    </source>
</reference>
<reference key="4">
    <citation type="journal article" date="2006" name="Mol. Syst. Biol.">
        <title>Highly accurate genome sequences of Escherichia coli K-12 strains MG1655 and W3110.</title>
        <authorList>
            <person name="Hayashi K."/>
            <person name="Morooka N."/>
            <person name="Yamamoto Y."/>
            <person name="Fujita K."/>
            <person name="Isono K."/>
            <person name="Choi S."/>
            <person name="Ohtsubo E."/>
            <person name="Baba T."/>
            <person name="Wanner B.L."/>
            <person name="Mori H."/>
            <person name="Horiuchi T."/>
        </authorList>
    </citation>
    <scope>NUCLEOTIDE SEQUENCE [LARGE SCALE GENOMIC DNA]</scope>
    <source>
        <strain>K12 / W3110 / ATCC 27325 / DSM 5911</strain>
    </source>
</reference>
<reference key="5">
    <citation type="journal article" date="1991" name="Biochim. Biophys. Acta">
        <title>Regulation of glpD and glpE gene expression by a cyclic AMP-cAMP receptor protein (cAMP-CRP) complex in Escherichia coli.</title>
        <authorList>
            <person name="Choi Y.-L."/>
            <person name="Kawase S."/>
            <person name="Kawamukai M."/>
            <person name="Sakai H."/>
            <person name="Komano T."/>
        </authorList>
    </citation>
    <scope>INDUCTION</scope>
    <source>
        <strain>K12 / W3110 / ATCC 27325 / DSM 5911</strain>
    </source>
</reference>
<reference key="6">
    <citation type="journal article" date="2000" name="J. Bacteriol.">
        <title>Characterization of a 12-kilodalton rhodanese encoded by glpE of Escherichia coli and its interaction with thioredoxin.</title>
        <authorList>
            <person name="Ray W.K."/>
            <person name="Zeng G."/>
            <person name="Potters M.B."/>
            <person name="Mansuri A.M."/>
            <person name="Larson T.J."/>
        </authorList>
    </citation>
    <scope>FUNCTION</scope>
    <scope>CATALYTIC ACTIVITY</scope>
    <scope>ACTIVITY REGULATION</scope>
    <scope>BIOPHYSICOCHEMICAL PROPERTIES</scope>
    <scope>SUBUNIT</scope>
    <scope>SUBCELLULAR LOCATION</scope>
    <source>
        <strain>BL21-DE3</strain>
    </source>
</reference>
<reference key="7">
    <citation type="journal article" date="2008" name="Open Microbiol. J.">
        <title>Biochemical and genetic characterization of pspE and glpE, two single-domain sulfurtransferases of Escherichia coli.</title>
        <authorList>
            <person name="Cheng H."/>
            <person name="Donahue J.L."/>
            <person name="Battle S.E."/>
            <person name="Ray W.K."/>
            <person name="Larson T.J."/>
        </authorList>
    </citation>
    <scope>DISRUPTION PHENOTYPE</scope>
    <source>
        <strain>K12 / MG1655 / ATCC 47076</strain>
    </source>
</reference>
<reference key="8">
    <citation type="journal article" date="2017" name="Appl. Microbiol. Biotechnol.">
        <title>Improved fermentative L-cysteine overproduction by enhancing a newly identified thiosulfate assimilation pathway in Escherichia coli.</title>
        <authorList>
            <person name="Kawano Y."/>
            <person name="Onishi F."/>
            <person name="Shiroyama M."/>
            <person name="Miura M."/>
            <person name="Tanaka N."/>
            <person name="Oshiro S."/>
            <person name="Nonaka G."/>
            <person name="Nakanishi T."/>
            <person name="Ohtsu I."/>
        </authorList>
    </citation>
    <scope>FUNCTION</scope>
    <scope>OVEREXPRESSION</scope>
    <source>
        <strain>K12 / BW25113</strain>
    </source>
</reference>
<reference key="9">
    <citation type="journal article" date="2000" name="Acta Crystallogr. D">
        <title>Crystals of GlpE, a 12 kDa sulfurtransferase from Escherichia coli, display 1.06 A resolution diffraction: a preliminary report.</title>
        <authorList>
            <person name="Bordo D."/>
            <person name="Larson T.J."/>
            <person name="Donahue J.L."/>
            <person name="Spallarossa A."/>
            <person name="Bolognesi M."/>
        </authorList>
    </citation>
    <scope>X-RAY CRYSTALLOGRAPHY (1.06 ANGSTROMS)</scope>
    <source>
        <strain>BL21-DE3</strain>
    </source>
</reference>
<reference evidence="14 15" key="10">
    <citation type="journal article" date="2001" name="Structure">
        <title>Escherichia coli GlpE is a prototype sulfurtransferase for the single-domain rhodanese homology superfamily.</title>
        <authorList>
            <person name="Spallarossa A."/>
            <person name="Donahue J.L."/>
            <person name="Larson T.J."/>
            <person name="Bolognesi M."/>
            <person name="Bordo D."/>
        </authorList>
    </citation>
    <scope>X-RAY CRYSTALLOGRAPHY (1.10 ANGSTROMS)</scope>
    <scope>SUBUNIT</scope>
    <scope>CYSTEINE PERSULFIDE AT CYS-65</scope>
    <scope>ACTIVE SITE</scope>
    <source>
        <strain>BL21-DE3</strain>
    </source>
</reference>
<proteinExistence type="evidence at protein level"/>
<name>GLPE_ECOLI</name>
<protein>
    <recommendedName>
        <fullName evidence="9">Thiosulfate sulfurtransferase GlpE</fullName>
        <ecNumber evidence="2 10">2.8.1.1</ecNumber>
    </recommendedName>
    <alternativeName>
        <fullName evidence="7">Thiosulfate:cyanide sulfurtransferase</fullName>
    </alternativeName>
</protein>